<accession>Q13241</accession>
<accession>O43321</accession>
<accession>O43773</accession>
<accession>Q9UBE3</accession>
<accession>Q9UEQ0</accession>
<protein>
    <recommendedName>
        <fullName>Natural killer cells antigen CD94</fullName>
    </recommendedName>
    <alternativeName>
        <fullName>KP43</fullName>
    </alternativeName>
    <alternativeName>
        <fullName>Killer cell lectin-like receptor subfamily D member 1</fullName>
    </alternativeName>
    <alternativeName>
        <fullName>NK cell receptor</fullName>
    </alternativeName>
    <cdAntigenName evidence="30">CD94</cdAntigenName>
</protein>
<evidence type="ECO:0000255" key="1"/>
<evidence type="ECO:0000255" key="2">
    <source>
        <dbReference type="PROSITE-ProRule" id="PRU00040"/>
    </source>
</evidence>
<evidence type="ECO:0000269" key="3">
    <source>
    </source>
</evidence>
<evidence type="ECO:0000269" key="4">
    <source>
    </source>
</evidence>
<evidence type="ECO:0000269" key="5">
    <source>
    </source>
</evidence>
<evidence type="ECO:0000269" key="6">
    <source>
    </source>
</evidence>
<evidence type="ECO:0000269" key="7">
    <source>
    </source>
</evidence>
<evidence type="ECO:0000269" key="8">
    <source>
    </source>
</evidence>
<evidence type="ECO:0000269" key="9">
    <source>
    </source>
</evidence>
<evidence type="ECO:0000269" key="10">
    <source>
    </source>
</evidence>
<evidence type="ECO:0000269" key="11">
    <source>
    </source>
</evidence>
<evidence type="ECO:0000269" key="12">
    <source>
    </source>
</evidence>
<evidence type="ECO:0000269" key="13">
    <source>
    </source>
</evidence>
<evidence type="ECO:0000269" key="14">
    <source>
    </source>
</evidence>
<evidence type="ECO:0000269" key="15">
    <source>
    </source>
</evidence>
<evidence type="ECO:0000269" key="16">
    <source>
    </source>
</evidence>
<evidence type="ECO:0000269" key="17">
    <source>
    </source>
</evidence>
<evidence type="ECO:0000269" key="18">
    <source>
    </source>
</evidence>
<evidence type="ECO:0000269" key="19">
    <source>
    </source>
</evidence>
<evidence type="ECO:0000269" key="20">
    <source>
    </source>
</evidence>
<evidence type="ECO:0000269" key="21">
    <source>
    </source>
</evidence>
<evidence type="ECO:0000269" key="22">
    <source>
    </source>
</evidence>
<evidence type="ECO:0000269" key="23">
    <source>
    </source>
</evidence>
<evidence type="ECO:0000269" key="24">
    <source>
    </source>
</evidence>
<evidence type="ECO:0000269" key="25">
    <source>
    </source>
</evidence>
<evidence type="ECO:0000269" key="26">
    <source>
    </source>
</evidence>
<evidence type="ECO:0000269" key="27">
    <source>
    </source>
</evidence>
<evidence type="ECO:0000269" key="28">
    <source>
    </source>
</evidence>
<evidence type="ECO:0000269" key="29">
    <source>
    </source>
</evidence>
<evidence type="ECO:0000303" key="30">
    <source>
    </source>
</evidence>
<evidence type="ECO:0000303" key="31">
    <source>
    </source>
</evidence>
<evidence type="ECO:0000305" key="32"/>
<evidence type="ECO:0007829" key="33">
    <source>
        <dbReference type="PDB" id="3BDW"/>
    </source>
</evidence>
<sequence>MAVFKTTLWRLISGTLGIICLSLMSTLGILLKNSFTKLSIEPAFTPGPNIELQKDSDCCSCQEKWVGYRCNCYFISSEQKTWNESRHLCASQKSSLLQLQNTDELDFMSSSQQFYWIGLSYSEEHTAWLWENGSALSQYLFPSFETFNTKNCIAYNPNGNALDESCEDKNRYICKQQLI</sequence>
<organism>
    <name type="scientific">Homo sapiens</name>
    <name type="common">Human</name>
    <dbReference type="NCBI Taxonomy" id="9606"/>
    <lineage>
        <taxon>Eukaryota</taxon>
        <taxon>Metazoa</taxon>
        <taxon>Chordata</taxon>
        <taxon>Craniata</taxon>
        <taxon>Vertebrata</taxon>
        <taxon>Euteleostomi</taxon>
        <taxon>Mammalia</taxon>
        <taxon>Eutheria</taxon>
        <taxon>Euarchontoglires</taxon>
        <taxon>Primates</taxon>
        <taxon>Haplorrhini</taxon>
        <taxon>Catarrhini</taxon>
        <taxon>Hominidae</taxon>
        <taxon>Homo</taxon>
    </lineage>
</organism>
<proteinExistence type="evidence at protein level"/>
<name>KLRD1_HUMAN</name>
<dbReference type="EMBL" id="U30610">
    <property type="protein sequence ID" value="AAC50291.1"/>
    <property type="molecule type" value="mRNA"/>
</dbReference>
<dbReference type="EMBL" id="Y14287">
    <property type="protein sequence ID" value="CAA74663.1"/>
    <property type="molecule type" value="Genomic_DNA"/>
</dbReference>
<dbReference type="EMBL" id="Y14288">
    <property type="protein sequence ID" value="CAA74663.1"/>
    <property type="status" value="JOINED"/>
    <property type="molecule type" value="Genomic_DNA"/>
</dbReference>
<dbReference type="EMBL" id="AJ000673">
    <property type="protein sequence ID" value="CAA04230.1"/>
    <property type="molecule type" value="Genomic_DNA"/>
</dbReference>
<dbReference type="EMBL" id="AJ000001">
    <property type="protein sequence ID" value="CAA03845.1"/>
    <property type="molecule type" value="mRNA"/>
</dbReference>
<dbReference type="EMBL" id="AB009597">
    <property type="protein sequence ID" value="BAA24450.1"/>
    <property type="molecule type" value="mRNA"/>
</dbReference>
<dbReference type="EMBL" id="AB010084">
    <property type="protein sequence ID" value="BAA24451.1"/>
    <property type="molecule type" value="Genomic_DNA"/>
</dbReference>
<dbReference type="EMBL" id="AC022075">
    <property type="status" value="NOT_ANNOTATED_CDS"/>
    <property type="molecule type" value="Genomic_DNA"/>
</dbReference>
<dbReference type="EMBL" id="BC028009">
    <property type="protein sequence ID" value="AAH28009.1"/>
    <property type="molecule type" value="mRNA"/>
</dbReference>
<dbReference type="CCDS" id="CCDS8621.1">
    <molecule id="Q13241-1"/>
</dbReference>
<dbReference type="CCDS" id="CCDS8622.1">
    <molecule id="Q13241-3"/>
</dbReference>
<dbReference type="RefSeq" id="NP_001107868.2">
    <molecule id="Q13241-1"/>
    <property type="nucleotide sequence ID" value="NM_001114396.3"/>
</dbReference>
<dbReference type="RefSeq" id="NP_001337991.1">
    <molecule id="Q13241-1"/>
    <property type="nucleotide sequence ID" value="NM_001351062.2"/>
</dbReference>
<dbReference type="RefSeq" id="NP_002253.2">
    <molecule id="Q13241-1"/>
    <property type="nucleotide sequence ID" value="NM_002262.5"/>
</dbReference>
<dbReference type="RefSeq" id="NP_031360.1">
    <molecule id="Q13241-3"/>
    <property type="nucleotide sequence ID" value="NM_007334.3"/>
</dbReference>
<dbReference type="RefSeq" id="XP_016874780.1">
    <property type="nucleotide sequence ID" value="XM_017019291.1"/>
</dbReference>
<dbReference type="PDB" id="1B6E">
    <property type="method" value="X-ray"/>
    <property type="resolution" value="2.60 A"/>
    <property type="chains" value="A=52-179"/>
</dbReference>
<dbReference type="PDB" id="3BDW">
    <property type="method" value="X-ray"/>
    <property type="resolution" value="2.50 A"/>
    <property type="chains" value="A/C=57-179"/>
</dbReference>
<dbReference type="PDB" id="3CDG">
    <property type="method" value="X-ray"/>
    <property type="resolution" value="3.40 A"/>
    <property type="chains" value="E/J=57-179"/>
</dbReference>
<dbReference type="PDB" id="3CII">
    <property type="method" value="X-ray"/>
    <property type="resolution" value="4.41 A"/>
    <property type="chains" value="G/I=59-179"/>
</dbReference>
<dbReference type="PDBsum" id="1B6E"/>
<dbReference type="PDBsum" id="3BDW"/>
<dbReference type="PDBsum" id="3CDG"/>
<dbReference type="PDBsum" id="3CII"/>
<dbReference type="SMR" id="Q13241"/>
<dbReference type="BioGRID" id="110023">
    <property type="interactions" value="132"/>
</dbReference>
<dbReference type="ComplexPortal" id="CPX-2502">
    <property type="entry name" value="CD94-NKG2A natural killer receptor complex"/>
</dbReference>
<dbReference type="ComplexPortal" id="CPX-5901">
    <property type="entry name" value="CD94-NKG2C natural killer receptor complex"/>
</dbReference>
<dbReference type="ComplexPortal" id="CPX-5903">
    <property type="entry name" value="CD94-NKG2E natural killer receptor complex"/>
</dbReference>
<dbReference type="CORUM" id="Q13241"/>
<dbReference type="FunCoup" id="Q13241">
    <property type="interactions" value="232"/>
</dbReference>
<dbReference type="IntAct" id="Q13241">
    <property type="interactions" value="103"/>
</dbReference>
<dbReference type="STRING" id="9606.ENSP00000338130"/>
<dbReference type="UniLectin" id="Q13241"/>
<dbReference type="GlyCosmos" id="Q13241">
    <property type="glycosylation" value="2 sites, No reported glycans"/>
</dbReference>
<dbReference type="GlyGen" id="Q13241">
    <property type="glycosylation" value="2 sites"/>
</dbReference>
<dbReference type="iPTMnet" id="Q13241"/>
<dbReference type="PhosphoSitePlus" id="Q13241"/>
<dbReference type="BioMuta" id="KLRD1"/>
<dbReference type="DMDM" id="334302835"/>
<dbReference type="MassIVE" id="Q13241"/>
<dbReference type="PaxDb" id="9606-ENSP00000371333"/>
<dbReference type="PeptideAtlas" id="Q13241"/>
<dbReference type="ProteomicsDB" id="59243">
    <molecule id="Q13241-1"/>
</dbReference>
<dbReference type="ProteomicsDB" id="59244">
    <molecule id="Q13241-2"/>
</dbReference>
<dbReference type="ProteomicsDB" id="59245">
    <molecule id="Q13241-3"/>
</dbReference>
<dbReference type="Antibodypedia" id="11712">
    <property type="antibodies" value="881 antibodies from 36 providers"/>
</dbReference>
<dbReference type="DNASU" id="3824"/>
<dbReference type="Ensembl" id="ENST00000336164.9">
    <molecule id="Q13241-1"/>
    <property type="protein sequence ID" value="ENSP00000338130.4"/>
    <property type="gene ID" value="ENSG00000134539.17"/>
</dbReference>
<dbReference type="Ensembl" id="ENST00000350274.9">
    <molecule id="Q13241-3"/>
    <property type="protein sequence ID" value="ENSP00000310929.7"/>
    <property type="gene ID" value="ENSG00000134539.17"/>
</dbReference>
<dbReference type="Ensembl" id="ENST00000381908.7">
    <molecule id="Q13241-1"/>
    <property type="protein sequence ID" value="ENSP00000371333.4"/>
    <property type="gene ID" value="ENSG00000134539.17"/>
</dbReference>
<dbReference type="GeneID" id="3824"/>
<dbReference type="KEGG" id="hsa:3824"/>
<dbReference type="MANE-Select" id="ENST00000336164.9">
    <property type="protein sequence ID" value="ENSP00000338130.4"/>
    <property type="RefSeq nucleotide sequence ID" value="NM_002262.5"/>
    <property type="RefSeq protein sequence ID" value="NP_002253.2"/>
</dbReference>
<dbReference type="UCSC" id="uc001qxw.5">
    <molecule id="Q13241-1"/>
    <property type="organism name" value="human"/>
</dbReference>
<dbReference type="AGR" id="HGNC:6378"/>
<dbReference type="CTD" id="3824"/>
<dbReference type="DisGeNET" id="3824"/>
<dbReference type="GeneCards" id="KLRD1"/>
<dbReference type="HGNC" id="HGNC:6378">
    <property type="gene designation" value="KLRD1"/>
</dbReference>
<dbReference type="HPA" id="ENSG00000134539">
    <property type="expression patterns" value="Tissue enhanced (lymphoid)"/>
</dbReference>
<dbReference type="MIM" id="602894">
    <property type="type" value="gene"/>
</dbReference>
<dbReference type="neXtProt" id="NX_Q13241"/>
<dbReference type="OpenTargets" id="ENSG00000134539"/>
<dbReference type="PharmGKB" id="PA30167"/>
<dbReference type="VEuPathDB" id="HostDB:ENSG00000134539"/>
<dbReference type="eggNOG" id="KOG4297">
    <property type="taxonomic scope" value="Eukaryota"/>
</dbReference>
<dbReference type="GeneTree" id="ENSGT00940000160107"/>
<dbReference type="InParanoid" id="Q13241"/>
<dbReference type="OMA" id="RFICERK"/>
<dbReference type="OrthoDB" id="8950604at2759"/>
<dbReference type="PAN-GO" id="Q13241">
    <property type="GO annotations" value="5 GO annotations based on evolutionary models"/>
</dbReference>
<dbReference type="TreeFam" id="TF336674"/>
<dbReference type="PathwayCommons" id="Q13241"/>
<dbReference type="Reactome" id="R-HSA-198933">
    <property type="pathway name" value="Immunoregulatory interactions between a Lymphoid and a non-Lymphoid cell"/>
</dbReference>
<dbReference type="Reactome" id="R-HSA-2172127">
    <property type="pathway name" value="DAP12 interactions"/>
</dbReference>
<dbReference type="Reactome" id="R-HSA-2424491">
    <property type="pathway name" value="DAP12 signaling"/>
</dbReference>
<dbReference type="SignaLink" id="Q13241"/>
<dbReference type="BioGRID-ORCS" id="3824">
    <property type="hits" value="8 hits in 1139 CRISPR screens"/>
</dbReference>
<dbReference type="ChiTaRS" id="KLRD1">
    <property type="organism name" value="human"/>
</dbReference>
<dbReference type="EvolutionaryTrace" id="Q13241"/>
<dbReference type="GeneWiki" id="KLRD1"/>
<dbReference type="GenomeRNAi" id="3824"/>
<dbReference type="Pharos" id="Q13241">
    <property type="development level" value="Tbio"/>
</dbReference>
<dbReference type="PRO" id="PR:Q13241"/>
<dbReference type="Proteomes" id="UP000005640">
    <property type="component" value="Chromosome 12"/>
</dbReference>
<dbReference type="RNAct" id="Q13241">
    <property type="molecule type" value="protein"/>
</dbReference>
<dbReference type="Bgee" id="ENSG00000134539">
    <property type="expression patterns" value="Expressed in granulocyte and 106 other cell types or tissues"/>
</dbReference>
<dbReference type="ExpressionAtlas" id="Q13241">
    <property type="expression patterns" value="baseline and differential"/>
</dbReference>
<dbReference type="GO" id="GO:0009897">
    <property type="term" value="C:external side of plasma membrane"/>
    <property type="evidence" value="ECO:0000318"/>
    <property type="project" value="GO_Central"/>
</dbReference>
<dbReference type="GO" id="GO:0005886">
    <property type="term" value="C:plasma membrane"/>
    <property type="evidence" value="ECO:0000314"/>
    <property type="project" value="UniProtKB"/>
</dbReference>
<dbReference type="GO" id="GO:0043235">
    <property type="term" value="C:receptor complex"/>
    <property type="evidence" value="ECO:0000314"/>
    <property type="project" value="UniProtKB"/>
</dbReference>
<dbReference type="GO" id="GO:0030246">
    <property type="term" value="F:carbohydrate binding"/>
    <property type="evidence" value="ECO:0007669"/>
    <property type="project" value="UniProtKB-KW"/>
</dbReference>
<dbReference type="GO" id="GO:0062082">
    <property type="term" value="F:HLA-E specific inhibitory MHC class Ib receptor activity"/>
    <property type="evidence" value="ECO:0000314"/>
    <property type="project" value="UniProtKB"/>
</dbReference>
<dbReference type="GO" id="GO:0023024">
    <property type="term" value="F:MHC class I protein complex binding"/>
    <property type="evidence" value="ECO:0000353"/>
    <property type="project" value="UniProtKB"/>
</dbReference>
<dbReference type="GO" id="GO:0023030">
    <property type="term" value="F:MHC class Ib protein binding, via antigen binding groove"/>
    <property type="evidence" value="ECO:0000353"/>
    <property type="project" value="UniProtKB"/>
</dbReference>
<dbReference type="GO" id="GO:1990405">
    <property type="term" value="F:protein antigen binding"/>
    <property type="evidence" value="ECO:0000314"/>
    <property type="project" value="UniProtKB"/>
</dbReference>
<dbReference type="GO" id="GO:0004888">
    <property type="term" value="F:transmembrane signaling receptor activity"/>
    <property type="evidence" value="ECO:0000318"/>
    <property type="project" value="GO_Central"/>
</dbReference>
<dbReference type="GO" id="GO:0002250">
    <property type="term" value="P:adaptive immune response"/>
    <property type="evidence" value="ECO:0007669"/>
    <property type="project" value="UniProtKB-KW"/>
</dbReference>
<dbReference type="GO" id="GO:0007166">
    <property type="term" value="P:cell surface receptor signaling pathway"/>
    <property type="evidence" value="ECO:0000304"/>
    <property type="project" value="ProtInc"/>
</dbReference>
<dbReference type="GO" id="GO:0002228">
    <property type="term" value="P:natural killer cell mediated immunity"/>
    <property type="evidence" value="ECO:0000314"/>
    <property type="project" value="UniProtKB"/>
</dbReference>
<dbReference type="GO" id="GO:0045953">
    <property type="term" value="P:negative regulation of natural killer cell mediated cytotoxicity"/>
    <property type="evidence" value="ECO:0000314"/>
    <property type="project" value="UniProtKB"/>
</dbReference>
<dbReference type="GO" id="GO:0001915">
    <property type="term" value="P:negative regulation of T cell mediated cytotoxicity"/>
    <property type="evidence" value="ECO:0000314"/>
    <property type="project" value="UniProtKB"/>
</dbReference>
<dbReference type="GO" id="GO:0045954">
    <property type="term" value="P:positive regulation of natural killer cell mediated cytotoxicity"/>
    <property type="evidence" value="ECO:0000314"/>
    <property type="project" value="UniProtKB"/>
</dbReference>
<dbReference type="GO" id="GO:0032814">
    <property type="term" value="P:regulation of natural killer cell activation"/>
    <property type="evidence" value="ECO:0000303"/>
    <property type="project" value="ComplexPortal"/>
</dbReference>
<dbReference type="GO" id="GO:0002223">
    <property type="term" value="P:stimulatory C-type lectin receptor signaling pathway"/>
    <property type="evidence" value="ECO:0000314"/>
    <property type="project" value="UniProtKB"/>
</dbReference>
<dbReference type="CDD" id="cd03593">
    <property type="entry name" value="CLECT_NK_receptors_like"/>
    <property type="match status" value="1"/>
</dbReference>
<dbReference type="FunFam" id="3.10.100.10:FF:000064">
    <property type="entry name" value="Natural killer cells antigen CD94"/>
    <property type="match status" value="1"/>
</dbReference>
<dbReference type="Gene3D" id="3.10.100.10">
    <property type="entry name" value="Mannose-Binding Protein A, subunit A"/>
    <property type="match status" value="1"/>
</dbReference>
<dbReference type="InterPro" id="IPR001304">
    <property type="entry name" value="C-type_lectin-like"/>
</dbReference>
<dbReference type="InterPro" id="IPR016186">
    <property type="entry name" value="C-type_lectin-like/link_sf"/>
</dbReference>
<dbReference type="InterPro" id="IPR016187">
    <property type="entry name" value="CTDL_fold"/>
</dbReference>
<dbReference type="InterPro" id="IPR050919">
    <property type="entry name" value="NKG2/CD94_NK_receptors"/>
</dbReference>
<dbReference type="InterPro" id="IPR033992">
    <property type="entry name" value="NKR-like_CTLD"/>
</dbReference>
<dbReference type="PANTHER" id="PTHR22800">
    <property type="entry name" value="C-TYPE LECTIN PROTEINS"/>
    <property type="match status" value="1"/>
</dbReference>
<dbReference type="PANTHER" id="PTHR22800:SF252">
    <property type="entry name" value="NATURAL KILLER CELLS ANTIGEN CD94"/>
    <property type="match status" value="1"/>
</dbReference>
<dbReference type="Pfam" id="PF00059">
    <property type="entry name" value="Lectin_C"/>
    <property type="match status" value="1"/>
</dbReference>
<dbReference type="SMART" id="SM00034">
    <property type="entry name" value="CLECT"/>
    <property type="match status" value="1"/>
</dbReference>
<dbReference type="SUPFAM" id="SSF56436">
    <property type="entry name" value="C-type lectin-like"/>
    <property type="match status" value="1"/>
</dbReference>
<dbReference type="PROSITE" id="PS50041">
    <property type="entry name" value="C_TYPE_LECTIN_2"/>
    <property type="match status" value="1"/>
</dbReference>
<keyword id="KW-0002">3D-structure</keyword>
<keyword id="KW-1064">Adaptive immunity</keyword>
<keyword id="KW-0025">Alternative splicing</keyword>
<keyword id="KW-1003">Cell membrane</keyword>
<keyword id="KW-1015">Disulfide bond</keyword>
<keyword id="KW-0325">Glycoprotein</keyword>
<keyword id="KW-0945">Host-virus interaction</keyword>
<keyword id="KW-0391">Immunity</keyword>
<keyword id="KW-0399">Innate immunity</keyword>
<keyword id="KW-0430">Lectin</keyword>
<keyword id="KW-0472">Membrane</keyword>
<keyword id="KW-1267">Proteomics identification</keyword>
<keyword id="KW-0675">Receptor</keyword>
<keyword id="KW-1185">Reference proteome</keyword>
<keyword id="KW-0735">Signal-anchor</keyword>
<keyword id="KW-0812">Transmembrane</keyword>
<keyword id="KW-1133">Transmembrane helix</keyword>
<feature type="chain" id="PRO_0000046587" description="Natural killer cells antigen CD94">
    <location>
        <begin position="1"/>
        <end position="179"/>
    </location>
</feature>
<feature type="topological domain" description="Cytoplasmic" evidence="1">
    <location>
        <begin position="1"/>
        <end position="10"/>
    </location>
</feature>
<feature type="transmembrane region" description="Helical; Signal-anchor for type II membrane protein" evidence="1">
    <location>
        <begin position="11"/>
        <end position="31"/>
    </location>
</feature>
<feature type="topological domain" description="Extracellular" evidence="1">
    <location>
        <begin position="32"/>
        <end position="179"/>
    </location>
</feature>
<feature type="domain" description="C-type lectin" evidence="2">
    <location>
        <begin position="68"/>
        <end position="175"/>
    </location>
</feature>
<feature type="glycosylation site" description="N-linked (GlcNAc...) asparagine" evidence="1">
    <location>
        <position position="83"/>
    </location>
</feature>
<feature type="glycosylation site" description="N-linked (GlcNAc...) asparagine" evidence="1">
    <location>
        <position position="132"/>
    </location>
</feature>
<feature type="disulfide bond" evidence="12 13">
    <location>
        <begin position="58"/>
        <end position="70"/>
    </location>
</feature>
<feature type="disulfide bond" description="Interchain (with C-116 in KLRC1/NGK2A)" evidence="12 13">
    <location>
        <position position="59"/>
    </location>
</feature>
<feature type="disulfide bond" evidence="3 12 13 14">
    <location>
        <begin position="61"/>
        <end position="72"/>
    </location>
</feature>
<feature type="disulfide bond" evidence="3 12 13 14">
    <location>
        <begin position="89"/>
        <end position="174"/>
    </location>
</feature>
<feature type="disulfide bond" evidence="3 12 13 14">
    <location>
        <begin position="152"/>
        <end position="166"/>
    </location>
</feature>
<feature type="splice variant" id="VSP_003052" description="In isoform 3." evidence="31">
    <original>MAVFKTTLWRLISGTLGIICLSLMSTLGILLKNS</original>
    <variation>MAA</variation>
    <location>
        <begin position="1"/>
        <end position="34"/>
    </location>
</feature>
<feature type="splice variant" id="VSP_003053" description="In isoform 2." evidence="32">
    <original>L</original>
    <variation>LQ</variation>
    <location>
        <position position="105"/>
    </location>
</feature>
<feature type="sequence variant" id="VAR_050103" description="In dbSNP:rs10772256." evidence="8 23 25">
    <original>S</original>
    <variation>A</variation>
    <location>
        <position position="25"/>
    </location>
</feature>
<feature type="mutagenesis site" description="Has no impact on the affinity for HLA-E." evidence="12">
    <original>Q</original>
    <variation>A</variation>
    <location>
        <position position="79"/>
    </location>
</feature>
<feature type="mutagenesis site" description="Abolishes binding to HLA-E." evidence="12">
    <original>Q</original>
    <variation>A</variation>
    <location>
        <position position="112"/>
    </location>
</feature>
<feature type="mutagenesis site" description="Abolishes binding to HLA-E." evidence="12">
    <original>F</original>
    <variation>A</variation>
    <location>
        <position position="114"/>
    </location>
</feature>
<feature type="mutagenesis site" description="Has no impact on the affinity for HLA-E." evidence="12">
    <original>T</original>
    <variation>A</variation>
    <location>
        <position position="146"/>
    </location>
</feature>
<feature type="mutagenesis site" description="Has no impact on the affinity for HLA-E." evidence="12">
    <original>N</original>
    <variation>A</variation>
    <location>
        <position position="148"/>
    </location>
</feature>
<feature type="mutagenesis site" description="Has no impact on the affinity for HLA-E." evidence="12">
    <original>N</original>
    <variation>A</variation>
    <location>
        <position position="158"/>
    </location>
</feature>
<feature type="mutagenesis site" description="Abolishes binding to HLA-E." evidence="12">
    <original>N</original>
    <variation>A</variation>
    <location>
        <position position="160"/>
    </location>
</feature>
<feature type="mutagenesis site" description="Abolishes binding to HLA-E." evidence="12">
    <original>L</original>
    <variation>A</variation>
    <location>
        <position position="162"/>
    </location>
</feature>
<feature type="mutagenesis site" description="Impairs binding to HLA-E." evidence="12">
    <original>D</original>
    <variation>A</variation>
    <location>
        <position position="163"/>
    </location>
</feature>
<feature type="mutagenesis site" description="Impairs binding to HLA-E." evidence="12">
    <original>E</original>
    <variation>A</variation>
    <location>
        <position position="164"/>
    </location>
</feature>
<feature type="mutagenesis site" description="Reduces binding to HLA-E." evidence="12">
    <original>D</original>
    <variation>A</variation>
    <location>
        <position position="168"/>
    </location>
</feature>
<feature type="turn" evidence="33">
    <location>
        <begin position="62"/>
        <end position="64"/>
    </location>
</feature>
<feature type="strand" evidence="33">
    <location>
        <begin position="66"/>
        <end position="68"/>
    </location>
</feature>
<feature type="strand" evidence="33">
    <location>
        <begin position="71"/>
        <end position="75"/>
    </location>
</feature>
<feature type="helix" evidence="33">
    <location>
        <begin position="82"/>
        <end position="91"/>
    </location>
</feature>
<feature type="helix" evidence="33">
    <location>
        <begin position="102"/>
        <end position="108"/>
    </location>
</feature>
<feature type="strand" evidence="33">
    <location>
        <begin position="118"/>
        <end position="122"/>
    </location>
</feature>
<feature type="turn" evidence="33">
    <location>
        <begin position="123"/>
        <end position="126"/>
    </location>
</feature>
<feature type="strand" evidence="33">
    <location>
        <begin position="127"/>
        <end position="130"/>
    </location>
</feature>
<feature type="turn" evidence="33">
    <location>
        <begin position="138"/>
        <end position="140"/>
    </location>
</feature>
<feature type="helix" evidence="33">
    <location>
        <begin position="142"/>
        <end position="146"/>
    </location>
</feature>
<feature type="strand" evidence="33">
    <location>
        <begin position="151"/>
        <end position="156"/>
    </location>
</feature>
<feature type="turn" evidence="33">
    <location>
        <begin position="157"/>
        <end position="159"/>
    </location>
</feature>
<feature type="strand" evidence="33">
    <location>
        <begin position="160"/>
        <end position="164"/>
    </location>
</feature>
<feature type="strand" evidence="33">
    <location>
        <begin position="170"/>
        <end position="176"/>
    </location>
</feature>
<reference key="1">
    <citation type="journal article" date="1995" name="Eur. J. Immunol.">
        <title>Molecular characterization of human CD94: a type II membrane glycoprotein related to the C-type lectin superfamily.</title>
        <authorList>
            <person name="Chang C."/>
            <person name="Rodriguez A."/>
            <person name="Carretero M."/>
            <person name="Lopez-Botet M."/>
            <person name="Phillips J.H."/>
            <person name="Lanier L.L."/>
        </authorList>
    </citation>
    <scope>NUCLEOTIDE SEQUENCE [MRNA] (ISOFORM 1)</scope>
    <scope>VARIANT ALA-25</scope>
    <source>
        <tissue>Blood</tissue>
    </source>
</reference>
<reference key="2">
    <citation type="journal article" date="1998" name="Immunogenetics">
        <title>Structure of the human CD94 C-type lectin gene.</title>
        <authorList>
            <person name="Rodriguez A."/>
            <person name="Carretero M."/>
            <person name="Glienke J."/>
            <person name="Bellon T."/>
            <person name="Ramirez A."/>
            <person name="Lehrach H."/>
            <person name="Francis F."/>
            <person name="Lopez-Botet M."/>
        </authorList>
    </citation>
    <scope>NUCLEOTIDE SEQUENCE [GENOMIC DNA]</scope>
    <scope>VARIANT ALA-25</scope>
    <source>
        <tissue>Placenta</tissue>
    </source>
</reference>
<reference key="3">
    <citation type="submission" date="1997-06" db="EMBL/GenBank/DDBJ databases">
        <authorList>
            <person name="Biassoni R."/>
        </authorList>
    </citation>
    <scope>NUCLEOTIDE SEQUENCE (ISOFORM 2)</scope>
</reference>
<reference key="4">
    <citation type="journal article" date="1998" name="Immunogenetics">
        <title>A alternatively spliced form of the human CD94 gene.</title>
        <authorList>
            <person name="Furukawa H."/>
            <person name="Yabe T."/>
            <person name="Watanabe K."/>
            <person name="Miyamoto R."/>
            <person name="Akaza T."/>
            <person name="Tadokoro K."/>
            <person name="Tohma S."/>
            <person name="Inoue T."/>
            <person name="Yamamoto K."/>
            <person name="Juji T."/>
        </authorList>
    </citation>
    <scope>NUCLEOTIDE SEQUENCE [GENOMIC DNA / MRNA] (ISOFORM 3)</scope>
</reference>
<reference key="5">
    <citation type="journal article" date="2006" name="Nature">
        <title>The finished DNA sequence of human chromosome 12.</title>
        <authorList>
            <person name="Scherer S.E."/>
            <person name="Muzny D.M."/>
            <person name="Buhay C.J."/>
            <person name="Chen R."/>
            <person name="Cree A."/>
            <person name="Ding Y."/>
            <person name="Dugan-Rocha S."/>
            <person name="Gill R."/>
            <person name="Gunaratne P."/>
            <person name="Harris R.A."/>
            <person name="Hawes A.C."/>
            <person name="Hernandez J."/>
            <person name="Hodgson A.V."/>
            <person name="Hume J."/>
            <person name="Jackson A."/>
            <person name="Khan Z.M."/>
            <person name="Kovar-Smith C."/>
            <person name="Lewis L.R."/>
            <person name="Lozado R.J."/>
            <person name="Metzker M.L."/>
            <person name="Milosavljevic A."/>
            <person name="Miner G.R."/>
            <person name="Montgomery K.T."/>
            <person name="Morgan M.B."/>
            <person name="Nazareth L.V."/>
            <person name="Scott G."/>
            <person name="Sodergren E."/>
            <person name="Song X.-Z."/>
            <person name="Steffen D."/>
            <person name="Lovering R.C."/>
            <person name="Wheeler D.A."/>
            <person name="Worley K.C."/>
            <person name="Yuan Y."/>
            <person name="Zhang Z."/>
            <person name="Adams C.Q."/>
            <person name="Ansari-Lari M.A."/>
            <person name="Ayele M."/>
            <person name="Brown M.J."/>
            <person name="Chen G."/>
            <person name="Chen Z."/>
            <person name="Clerc-Blankenburg K.P."/>
            <person name="Davis C."/>
            <person name="Delgado O."/>
            <person name="Dinh H.H."/>
            <person name="Draper H."/>
            <person name="Gonzalez-Garay M.L."/>
            <person name="Havlak P."/>
            <person name="Jackson L.R."/>
            <person name="Jacob L.S."/>
            <person name="Kelly S.H."/>
            <person name="Li L."/>
            <person name="Li Z."/>
            <person name="Liu J."/>
            <person name="Liu W."/>
            <person name="Lu J."/>
            <person name="Maheshwari M."/>
            <person name="Nguyen B.-V."/>
            <person name="Okwuonu G.O."/>
            <person name="Pasternak S."/>
            <person name="Perez L.M."/>
            <person name="Plopper F.J.H."/>
            <person name="Santibanez J."/>
            <person name="Shen H."/>
            <person name="Tabor P.E."/>
            <person name="Verduzco D."/>
            <person name="Waldron L."/>
            <person name="Wang Q."/>
            <person name="Williams G.A."/>
            <person name="Zhang J."/>
            <person name="Zhou J."/>
            <person name="Allen C.C."/>
            <person name="Amin A.G."/>
            <person name="Anyalebechi V."/>
            <person name="Bailey M."/>
            <person name="Barbaria J.A."/>
            <person name="Bimage K.E."/>
            <person name="Bryant N.P."/>
            <person name="Burch P.E."/>
            <person name="Burkett C.E."/>
            <person name="Burrell K.L."/>
            <person name="Calderon E."/>
            <person name="Cardenas V."/>
            <person name="Carter K."/>
            <person name="Casias K."/>
            <person name="Cavazos I."/>
            <person name="Cavazos S.R."/>
            <person name="Ceasar H."/>
            <person name="Chacko J."/>
            <person name="Chan S.N."/>
            <person name="Chavez D."/>
            <person name="Christopoulos C."/>
            <person name="Chu J."/>
            <person name="Cockrell R."/>
            <person name="Cox C.D."/>
            <person name="Dang M."/>
            <person name="Dathorne S.R."/>
            <person name="David R."/>
            <person name="Davis C.M."/>
            <person name="Davy-Carroll L."/>
            <person name="Deshazo D.R."/>
            <person name="Donlin J.E."/>
            <person name="D'Souza L."/>
            <person name="Eaves K.A."/>
            <person name="Egan A."/>
            <person name="Emery-Cohen A.J."/>
            <person name="Escotto M."/>
            <person name="Flagg N."/>
            <person name="Forbes L.D."/>
            <person name="Gabisi A.M."/>
            <person name="Garza M."/>
            <person name="Hamilton C."/>
            <person name="Henderson N."/>
            <person name="Hernandez O."/>
            <person name="Hines S."/>
            <person name="Hogues M.E."/>
            <person name="Huang M."/>
            <person name="Idlebird D.G."/>
            <person name="Johnson R."/>
            <person name="Jolivet A."/>
            <person name="Jones S."/>
            <person name="Kagan R."/>
            <person name="King L.M."/>
            <person name="Leal B."/>
            <person name="Lebow H."/>
            <person name="Lee S."/>
            <person name="LeVan J.M."/>
            <person name="Lewis L.C."/>
            <person name="London P."/>
            <person name="Lorensuhewa L.M."/>
            <person name="Loulseged H."/>
            <person name="Lovett D.A."/>
            <person name="Lucier A."/>
            <person name="Lucier R.L."/>
            <person name="Ma J."/>
            <person name="Madu R.C."/>
            <person name="Mapua P."/>
            <person name="Martindale A.D."/>
            <person name="Martinez E."/>
            <person name="Massey E."/>
            <person name="Mawhiney S."/>
            <person name="Meador M.G."/>
            <person name="Mendez S."/>
            <person name="Mercado C."/>
            <person name="Mercado I.C."/>
            <person name="Merritt C.E."/>
            <person name="Miner Z.L."/>
            <person name="Minja E."/>
            <person name="Mitchell T."/>
            <person name="Mohabbat F."/>
            <person name="Mohabbat K."/>
            <person name="Montgomery B."/>
            <person name="Moore N."/>
            <person name="Morris S."/>
            <person name="Munidasa M."/>
            <person name="Ngo R.N."/>
            <person name="Nguyen N.B."/>
            <person name="Nickerson E."/>
            <person name="Nwaokelemeh O.O."/>
            <person name="Nwokenkwo S."/>
            <person name="Obregon M."/>
            <person name="Oguh M."/>
            <person name="Oragunye N."/>
            <person name="Oviedo R.J."/>
            <person name="Parish B.J."/>
            <person name="Parker D.N."/>
            <person name="Parrish J."/>
            <person name="Parks K.L."/>
            <person name="Paul H.A."/>
            <person name="Payton B.A."/>
            <person name="Perez A."/>
            <person name="Perrin W."/>
            <person name="Pickens A."/>
            <person name="Primus E.L."/>
            <person name="Pu L.-L."/>
            <person name="Puazo M."/>
            <person name="Quiles M.M."/>
            <person name="Quiroz J.B."/>
            <person name="Rabata D."/>
            <person name="Reeves K."/>
            <person name="Ruiz S.J."/>
            <person name="Shao H."/>
            <person name="Sisson I."/>
            <person name="Sonaike T."/>
            <person name="Sorelle R.P."/>
            <person name="Sutton A.E."/>
            <person name="Svatek A.F."/>
            <person name="Svetz L.A."/>
            <person name="Tamerisa K.S."/>
            <person name="Taylor T.R."/>
            <person name="Teague B."/>
            <person name="Thomas N."/>
            <person name="Thorn R.D."/>
            <person name="Trejos Z.Y."/>
            <person name="Trevino B.K."/>
            <person name="Ukegbu O.N."/>
            <person name="Urban J.B."/>
            <person name="Vasquez L.I."/>
            <person name="Vera V.A."/>
            <person name="Villasana D.M."/>
            <person name="Wang L."/>
            <person name="Ward-Moore S."/>
            <person name="Warren J.T."/>
            <person name="Wei X."/>
            <person name="White F."/>
            <person name="Williamson A.L."/>
            <person name="Wleczyk R."/>
            <person name="Wooden H.S."/>
            <person name="Wooden S.H."/>
            <person name="Yen J."/>
            <person name="Yoon L."/>
            <person name="Yoon V."/>
            <person name="Zorrilla S.E."/>
            <person name="Nelson D."/>
            <person name="Kucherlapati R."/>
            <person name="Weinstock G."/>
            <person name="Gibbs R.A."/>
        </authorList>
    </citation>
    <scope>NUCLEOTIDE SEQUENCE [LARGE SCALE GENOMIC DNA]</scope>
</reference>
<reference key="6">
    <citation type="journal article" date="2004" name="Genome Res.">
        <title>The status, quality, and expansion of the NIH full-length cDNA project: the Mammalian Gene Collection (MGC).</title>
        <authorList>
            <consortium name="The MGC Project Team"/>
        </authorList>
    </citation>
    <scope>NUCLEOTIDE SEQUENCE [LARGE SCALE MRNA] (ISOFORM 1)</scope>
    <scope>VARIANT ALA-25</scope>
    <source>
        <tissue>Blood</tissue>
    </source>
</reference>
<reference key="7">
    <citation type="journal article" date="1997" name="Immunity">
        <title>Functionally and structurally distinct NK cell receptor repertoires in the peripheral blood of two human donors.</title>
        <authorList>
            <person name="Valiante N.M."/>
            <person name="Uhrberg M."/>
            <person name="Shilling H.G."/>
            <person name="Lienert-Weidenbach K."/>
            <person name="Arnett K.L."/>
            <person name="D'Andrea A."/>
            <person name="Phillips J.H."/>
            <person name="Lanier L.L."/>
            <person name="Parham P."/>
        </authorList>
    </citation>
    <scope>FUNCTION</scope>
    <scope>TISSUE SPECIFICITY</scope>
</reference>
<reference key="8">
    <citation type="journal article" date="1998" name="Eur. J. Immunol.">
        <title>Inhibition of antigen-induced T cell response and antibody-induced NK cell cytotoxicity by NKG2A: association of NKG2A with SHP-1 and SHP-2 protein-tyrosine phosphatases.</title>
        <authorList>
            <person name="Le Drean E."/>
            <person name="Vely F."/>
            <person name="Olcese L."/>
            <person name="Cambiaggi A."/>
            <person name="Guia S."/>
            <person name="Krystal G."/>
            <person name="Gervois N."/>
            <person name="Moretta A."/>
            <person name="Jotereau F."/>
            <person name="Vivier E."/>
        </authorList>
    </citation>
    <scope>FUNCTION</scope>
    <scope>SUBCELLULAR LOCATION</scope>
    <scope>TISSUE SPECIFICITY</scope>
</reference>
<reference key="9">
    <citation type="journal article" date="1998" name="Eur. J. Immunol.">
        <title>HLA-E-bound peptides influence recognition by inhibitory and triggering CD94/NKG2 receptors: preferential response to an HLA-G-derived nonamer.</title>
        <authorList>
            <person name="Llano M."/>
            <person name="Lee N."/>
            <person name="Navarro F."/>
            <person name="Garcia P."/>
            <person name="Albar J.P."/>
            <person name="Geraghty D.E."/>
            <person name="Lopez-Botet M."/>
        </authorList>
    </citation>
    <scope>FUNCTION</scope>
</reference>
<reference key="10">
    <citation type="journal article" date="1998" name="Immunity">
        <title>Association of DAP12 with activating CD94/NKG2C NK cell receptors.</title>
        <authorList>
            <person name="Lanier L.L."/>
            <person name="Corliss B."/>
            <person name="Wu J."/>
            <person name="Phillips J.H."/>
        </authorList>
    </citation>
    <scope>FUNCTION</scope>
    <scope>INTERACTION WITH KLRC2 AND TYROBP</scope>
</reference>
<reference key="11">
    <citation type="journal article" date="1998" name="Nature">
        <title>HLA-E binds to natural killer cell receptors CD94/NKG2A, B and C.</title>
        <authorList>
            <person name="Braud V.M."/>
            <person name="Allan D.S."/>
            <person name="O'Callaghan C.A."/>
            <person name="Soederstroem K."/>
            <person name="D'Andrea A."/>
            <person name="Ogg G.S."/>
            <person name="Lazetic S."/>
            <person name="Young N.T."/>
            <person name="Bell J.I."/>
            <person name="Phillips J.H."/>
            <person name="Lanier L.L."/>
            <person name="McMichael A.J."/>
        </authorList>
    </citation>
    <scope>FUNCTION</scope>
    <scope>INTERACTION WITH HLA-E-PEPTIDE COMPLEX</scope>
</reference>
<reference key="12">
    <citation type="journal article" date="1999" name="EMBO J.">
        <title>Kinetics and peptide dependency of the binding of the inhibitory NK receptor CD94/NKG2-A and the activating receptor CD94/NKG2-C to HLA-E.</title>
        <authorList>
            <person name="Vales-Gomez M."/>
            <person name="Reyburn H.T."/>
            <person name="Erskine R.A."/>
            <person name="Lopez-Botet M."/>
            <person name="Strominger J.L."/>
        </authorList>
    </citation>
    <scope>INTERACTION WITH HLA-E-PEPTIDE COMPLEX</scope>
    <scope>SUBUNIT</scope>
</reference>
<reference key="13">
    <citation type="journal article" date="2000" name="Science">
        <title>Surface expression of HLA-E, an inhibitor of natural killer cells, enhanced by human cytomegalovirus gpUL40.</title>
        <authorList>
            <person name="Tomasec P."/>
            <person name="Braud V.M."/>
            <person name="Rickards C."/>
            <person name="Powell M.B."/>
            <person name="McSharry B.P."/>
            <person name="Gadola S."/>
            <person name="Cerundolo V."/>
            <person name="Borysiewicz L.K."/>
            <person name="McMichael A.J."/>
            <person name="Wilkinson G.W."/>
        </authorList>
    </citation>
    <scope>FUNCTION (MICROBIAL INFECTION)</scope>
</reference>
<reference key="14">
    <citation type="journal article" date="2002" name="Immunity">
        <title>TCR specificity dictates CD94/NKG2A expression by human CTL.</title>
        <authorList>
            <person name="Jabri B."/>
            <person name="Selby J.M."/>
            <person name="Negulescu H."/>
            <person name="Lee L."/>
            <person name="Roberts A.I."/>
            <person name="Beavis A."/>
            <person name="Lopez-Botet M."/>
            <person name="Ebert E.C."/>
            <person name="Winchester R.J."/>
        </authorList>
    </citation>
    <scope>FUNCTION</scope>
    <scope>TISSUE SPECIFICITY</scope>
</reference>
<reference key="15">
    <citation type="journal article" date="2002" name="J. Immunol.">
        <title>Role that each NKG2A immunoreceptor tyrosine-based inhibitory motif plays in mediating the human CD94/NKG2A inhibitory signal.</title>
        <authorList>
            <person name="Kabat J."/>
            <person name="Borrego F."/>
            <person name="Brooks A."/>
            <person name="Coligan J.E."/>
        </authorList>
    </citation>
    <scope>FUNCTION</scope>
</reference>
<reference key="16">
    <citation type="journal article" date="2005" name="Antivir. Ther.">
        <title>HIV-1 infection leads to increased HLA-E expression resulting in impaired function of natural killer cells.</title>
        <authorList>
            <person name="Nattermann J."/>
            <person name="Nischalke H.D."/>
            <person name="Hofmeister V."/>
            <person name="Kupfer B."/>
            <person name="Ahlenstiel G."/>
            <person name="Feldmann G."/>
            <person name="Rockstroh J."/>
            <person name="Weiss E.H."/>
            <person name="Sauerbruch T."/>
            <person name="Spengler U."/>
        </authorList>
    </citation>
    <scope>FUNCTION (MICROBIAL INFECTION)</scope>
</reference>
<reference key="17">
    <citation type="journal article" date="2005" name="Eur. J. Immunol.">
        <title>The CD94/NKG2C killer lectin-like receptor constitutes an alternative activation pathway for a subset of CD8+ T cells.</title>
        <authorList>
            <person name="Guma M."/>
            <person name="Busch L.K."/>
            <person name="Salazar-Fontana L.I."/>
            <person name="Bellosillo B."/>
            <person name="Morte C."/>
            <person name="Garcia P."/>
            <person name="Lopez-Botet M."/>
        </authorList>
    </citation>
    <scope>FUNCTION</scope>
    <scope>INTERACTION WITH TYROBP</scope>
</reference>
<reference key="18">
    <citation type="journal article" date="2008" name="J. Clin. Invest.">
        <title>Small intestinal CD8+TCRgammadelta+NKG2A+ intraepithelial lymphocytes have attributes of regulatory cells in patients with celiac disease.</title>
        <authorList>
            <person name="Bhagat G."/>
            <person name="Naiyer A.J."/>
            <person name="Shah J.G."/>
            <person name="Harper J."/>
            <person name="Jabri B."/>
            <person name="Wang T.C."/>
            <person name="Green P.H."/>
            <person name="Manavalan J.S."/>
        </authorList>
    </citation>
    <scope>FUNCTION</scope>
</reference>
<reference key="19">
    <citation type="journal article" date="2011" name="J. Leukoc. Biol.">
        <title>NKG2A inhibits NKG2C effector functions of gammadelta T cells: implications in health and disease.</title>
        <authorList>
            <person name="Angelini D.F."/>
            <person name="Zambello R."/>
            <person name="Galandrini R."/>
            <person name="Diamantini A."/>
            <person name="Placido R."/>
            <person name="Micucci F."/>
            <person name="Poccia F."/>
            <person name="Semenzato G."/>
            <person name="Borsellino G."/>
            <person name="Santoni A."/>
            <person name="Battistini L."/>
        </authorList>
    </citation>
    <scope>FUNCTION</scope>
    <scope>SUBCELLULAR LOCATION</scope>
    <scope>TISSUE SPECIFICITY</scope>
</reference>
<reference key="20">
    <citation type="journal article" date="2011" name="Proc. Natl. Acad. Sci. U.S.A.">
        <title>Expansion of a unique CD57-positive NKG2Chi natural killer cell subset during acute human cytomegalovirus infection.</title>
        <authorList>
            <person name="Lopez-Verges S."/>
            <person name="Milush J.M."/>
            <person name="Schwartz B.S."/>
            <person name="Pando M.J."/>
            <person name="Jarjoura J."/>
            <person name="York V.A."/>
            <person name="Houchins J.P."/>
            <person name="Miller S."/>
            <person name="Kang S.M."/>
            <person name="Norris P.J."/>
            <person name="Nixon D.F."/>
            <person name="Lanier L.L."/>
        </authorList>
    </citation>
    <scope>FUNCTION</scope>
    <scope>TISSUE SPECIFICITY</scope>
</reference>
<reference key="21">
    <citation type="journal article" date="2013" name="J. Biol. Chem.">
        <title>Polymorphism in human cytomegalovirus UL40 impacts on recognition of human leukocyte antigen-E (HLA-E) by natural killer cells.</title>
        <authorList>
            <person name="Heatley S.L."/>
            <person name="Pietra G."/>
            <person name="Lin J."/>
            <person name="Widjaja J.M."/>
            <person name="Harpur C.M."/>
            <person name="Lester S."/>
            <person name="Rossjohn J."/>
            <person name="Szer J."/>
            <person name="Schwarer A."/>
            <person name="Bradstock K."/>
            <person name="Bardy P.G."/>
            <person name="Mingari M.C."/>
            <person name="Moretta L."/>
            <person name="Sullivan L.C."/>
            <person name="Brooks A.G."/>
        </authorList>
    </citation>
    <scope>FUNCTION (MICROBIAL INFECTION)</scope>
</reference>
<reference key="22">
    <citation type="journal article" date="2018" name="Cell">
        <title>Anti-NKG2A mAb Is a Checkpoint Inhibitor that Promotes Anti-tumor Immunity by Unleashing Both T and NK Cells.</title>
        <authorList>
            <person name="Andre P."/>
            <person name="Denis C."/>
            <person name="Soulas C."/>
            <person name="Bourbon-Caillet C."/>
            <person name="Lopez J."/>
            <person name="Arnoux T."/>
            <person name="Blery M."/>
            <person name="Bonnafous C."/>
            <person name="Gauthier L."/>
            <person name="Morel A."/>
            <person name="Rossi B."/>
            <person name="Remark R."/>
            <person name="Breso V."/>
            <person name="Bonnet E."/>
            <person name="Habif G."/>
            <person name="Guia S."/>
            <person name="Lalanne A.I."/>
            <person name="Hoffmann C."/>
            <person name="Lantz O."/>
            <person name="Fayette J."/>
            <person name="Boyer-Chammard A."/>
            <person name="Zerbib R."/>
            <person name="Dodion P."/>
            <person name="Ghadially H."/>
            <person name="Jure-Kunkel M."/>
            <person name="Morel Y."/>
            <person name="Herbst R."/>
            <person name="Narni-Mancinelli E."/>
            <person name="Cohen R.B."/>
            <person name="Vivier E."/>
        </authorList>
    </citation>
    <scope>FUNCTION</scope>
</reference>
<reference key="23">
    <citation type="journal article" date="2018" name="Cell Rep.">
        <title>Distinct HLA-E Peptide Complexes Modify Antibody-Driven Effector Functions of Adaptive NK Cells.</title>
        <authorList>
            <person name="Roelle A."/>
            <person name="Meyer M."/>
            <person name="Calderazzo S."/>
            <person name="Jaeger D."/>
            <person name="Momburg F."/>
        </authorList>
    </citation>
    <scope>FUNCTION</scope>
</reference>
<reference key="24">
    <citation type="journal article" date="2019" name="J. Clin. Invest.">
        <title>Blocking expression of inhibitory receptor NKG2A overcomes tumor resistance to NK cells.</title>
        <authorList>
            <person name="Kamiya T."/>
            <person name="Seow S.V."/>
            <person name="Wong D."/>
            <person name="Robinson M."/>
            <person name="Campana D."/>
        </authorList>
    </citation>
    <scope>FUNCTION</scope>
</reference>
<reference key="25">
    <citation type="journal article" date="2020" name="Cells">
        <title>SARS-CoV-2 Spike 1 Protein Controls Natural Killer Cell Activation via the HLA-E/NKG2A Pathway.</title>
        <authorList>
            <person name="Bortolotti D."/>
            <person name="Gentili V."/>
            <person name="Rizzo S."/>
            <person name="Rotola A."/>
            <person name="Rizzo R."/>
        </authorList>
    </citation>
    <scope>FUNCTION (MICROBIAL INFECTION)</scope>
</reference>
<reference key="26">
    <citation type="journal article" date="2023" name="Nat. Immunol.">
        <title>HLA class I signal peptide polymorphism determines the level of CD94/NKG2-HLA-E-mediated regulation of effector cell responses.</title>
        <authorList>
            <person name="Lin Z."/>
            <person name="Bashirova A.A."/>
            <person name="Viard M."/>
            <person name="Garner L."/>
            <person name="Quastel M."/>
            <person name="Beiersdorfer M."/>
            <person name="Kasprzak W.K."/>
            <person name="Akdag M."/>
            <person name="Yuki Y."/>
            <person name="Ojeda P."/>
            <person name="Das S."/>
            <person name="Andresson T."/>
            <person name="Naranbhai V."/>
            <person name="Horowitz A."/>
            <person name="McMichael A.J."/>
            <person name="Hoelzemer A."/>
            <person name="Gillespie G.M."/>
            <person name="Garcia-Beltran W.F."/>
            <person name="Carrington M."/>
        </authorList>
    </citation>
    <scope>FUNCTION</scope>
</reference>
<reference key="27">
    <citation type="journal article" date="1999" name="Immunity">
        <title>Structure of CD94 reveals a novel C-type lectin fold: implications for the NK cell-associated CD94/NKG2 receptors.</title>
        <authorList>
            <person name="Boyington J.C."/>
            <person name="Riaz A.N."/>
            <person name="Patamawenu A."/>
            <person name="Coligan J.E."/>
            <person name="Brooks A.G."/>
            <person name="Sun P.D."/>
        </authorList>
    </citation>
    <scope>X-RAY CRYSTALLOGRAPHY (2.6 ANGSTROMS) OF 52-179</scope>
    <scope>FUNCTION</scope>
    <scope>DISULFIDE BONDS</scope>
</reference>
<reference key="28">
    <citation type="journal article" date="2007" name="Immunity">
        <title>The heterodimeric assembly of the CD94-NKG2 receptor family and implications for human leukocyte antigen-E recognition.</title>
        <authorList>
            <person name="Sullivan L.C."/>
            <person name="Clements C.S."/>
            <person name="Beddoe T."/>
            <person name="Johnson D."/>
            <person name="Hoare H.L."/>
            <person name="Lin J."/>
            <person name="Huyton T."/>
            <person name="Hopkins E.J."/>
            <person name="Reid H.H."/>
            <person name="Wilce M.C."/>
            <person name="Kabat J."/>
            <person name="Borrego F."/>
            <person name="Coligan J.E."/>
            <person name="Rossjohn J."/>
            <person name="Brooks A.G."/>
        </authorList>
    </citation>
    <scope>X-RAY CRYSTALLOGRAPHY (2.5 ANGSTROMS) OF 57-179 IN COMPLEX WITH NGK2A</scope>
    <scope>FUNCTION</scope>
    <scope>SUBUNIT</scope>
    <scope>DISULFIDE BONDS</scope>
    <scope>MUTAGENESIS OF GLN-79; GLN-112; PHE-114; THR-146; ASN-148; ASN-158; ASN-160; LEU-162; ASP-163; GLU-164 AND ASP-168</scope>
</reference>
<reference key="29">
    <citation type="journal article" date="2008" name="Proc. Natl. Acad. Sci. U.S.A.">
        <title>Structural basis for NKG2A/CD94 recognition of HLA-E.</title>
        <authorList>
            <person name="Kaiser B.K."/>
            <person name="Pizarro J.C."/>
            <person name="Kerns J."/>
            <person name="Strong R.K."/>
        </authorList>
    </citation>
    <scope>X-RAY CRYSTALLOGRAPHY (4.41 ANGSTROMS) OF 59-179 IN COMPLEX WITH NGK2A</scope>
    <scope>SUBUNIT</scope>
    <scope>DISULFIDE BONDS</scope>
</reference>
<reference key="30">
    <citation type="journal article" date="2008" name="J. Exp. Med.">
        <title>CD94-NKG2A recognition of human leukocyte antigen (HLA)-E bound to an HLA class I leader sequence.</title>
        <authorList>
            <person name="Petrie E.J."/>
            <person name="Clements C.S."/>
            <person name="Lin J."/>
            <person name="Sullivan L.C."/>
            <person name="Johnson D."/>
            <person name="Huyton T."/>
            <person name="Heroux A."/>
            <person name="Hoare H.L."/>
            <person name="Beddoe T."/>
            <person name="Reid H.H."/>
            <person name="Wilce M.C."/>
            <person name="Brooks A.G."/>
            <person name="Rossjohn J."/>
        </authorList>
    </citation>
    <scope>X-RAY CRYSTALLOGRAPHY (3.4 ANGSTROMS) OF 57-179 IN COMPLEX WITH NGK2A</scope>
    <scope>SUBUNIT</scope>
    <scope>DISULFIDE BONDS</scope>
</reference>
<gene>
    <name type="primary">KLRD1</name>
    <name type="synonym">CD94</name>
</gene>
<comment type="function">
    <text evidence="3 7 11 12 22 24 27 29">Immune receptor involved in self-nonself discrimination. In complex with KLRC1 or KLRC2 on cytotoxic and regulatory lymphocyte subsets, recognizes non-classical major histocompatibility (MHC) class Ib molecule HLA-E loaded with self-peptides derived from the signal sequence of classical MHC class Ia and non-classical MHC class Ib molecules (PubMed:10023772, PubMed:18064301, PubMed:18083576, PubMed:37264229, PubMed:9486650, PubMed:9754572). Enables cytotoxic cells to monitor the expression of MHC class I molecules in healthy cells and to tolerate self (PubMed:12387742, PubMed:18064301, PubMed:9430220). Primarily functions as a ligand binding subunit as it lacks the capacity to signal.</text>
</comment>
<comment type="function">
    <text evidence="6 7 11 19 20 24 26 27">KLRD1-KLRC1 acts as an immune inhibitory receptor. Key inhibitory receptor on natural killer (NK) cells that regulates their activation and effector functions (PubMed:30860984, PubMed:9430220, PubMed:9485206, PubMed:9486650). Dominantly counteracts T cell receptor signaling on a subset of memory/effector CD8-positive T cells as part of an antigen-driven response to avoid autoimmunity (PubMed:12387742). On intraepithelial CD8-positive gamma-delta regulatory T cells triggers TGFB1 secretion, which in turn limits the cytotoxic programming of intraepithelial CD8-positive alpha-beta T cells, distinguishing harmless from pathogenic antigens (PubMed:18064301). In HLA-E-rich tumor microenvironment, acts as an immune inhibitory checkpoint and may contribute to progressive loss of effector functions of NK cells and tumor-specific T cells, a state known as cell exhaustion (PubMed:30503213, PubMed:30860984). Upon HLA-E-peptide binding, transmits intracellular signals through KLRC1 immunoreceptor tyrosine-based inhibition motifs (ITIMs) by recruiting INPP5D/SHIP-1 and INPPL1/SHIP-2 tyrosine phosphatases to ITIMs, and ultimately opposing signals transmitted by activating receptors through dephosphorylation of proximal signaling molecules (PubMed:12165520, PubMed:9485206).</text>
</comment>
<comment type="function">
    <text evidence="10 15 16 18 28 29">KLRD1-KLRC2 acts as an immune activating receptor (PubMed:15940674, PubMed:9655483). On cytotoxic lymphocyte subsets recognizes HLA-E loaded with signal sequence-derived peptides from non-classical MHC class Ib HLA-G molecules, likely playing a role in the generation and effector functions of adaptive NK cells and in maternal-fetal tolerance during pregnancy (PubMed:30134159, PubMed:9754572). Regulates the effector functions of terminally differentiated cytotoxic lymphocyte subsets, and in particular may play a role in adaptive NK cell response to viral infection (PubMed:20952657, PubMed:21825173). Upon HLA-E-peptide binding, transmits intracellular signals via the adapter protein TYROBP/DAP12, triggering the phosphorylation of proximal signaling molecules and cell activation (PubMed:15940674, PubMed:9655483).</text>
</comment>
<comment type="function">
    <text evidence="5 17">(Microbial infection) Viruses like human cytomegalovirus have evolved an escape mechanism whereby virus-induced down-regulation of host MHC class I molecules is coupled to the binding of viral peptides to HLA-E, restoring HLA-E expression and inducing HLA-E-dependent NK cell immune tolerance to infected cells. Recognizes HLA-E in complex with human cytomegalovirus UL40-derived peptide (VMAPRTLIL) and inhibits NK cell cytotoxicity.</text>
</comment>
<comment type="function">
    <text evidence="9">(Microbial infection) May recognize HLA-E in complex with HIV-1 gag/Capsid protein p24-derived peptide (AISPRTLNA) on infected cells and may inhibit NK cell cytotoxicity, a mechanism that allows HIV-1 to escape immune recognition.</text>
</comment>
<comment type="function">
    <text evidence="21">(Microbial infection) Upon SARS-CoV-2 infection, may contribute to functional exhaustion of cytotoxic NK cells and CD8-positive T cells (PubMed:32859121). On NK cells, may recognize HLA-E in complex with SARS-CoV-2 S/Spike protein S1-derived peptide (LQPRTFLL) expressed on the surface of lung epithelial cells, inducing NK cell exhaustion and dampening antiviral immune surveillance (PubMed:32859121).</text>
</comment>
<comment type="subunit">
    <text evidence="4 12 13 14 27 28">Can form disulfide-bonded heterodimer with NKG2 family members KLRC1 and KLRC2 (PubMed:18083576, PubMed:18332182, PubMed:18448674, PubMed:9655483). KLRD1-KLRC1 heterodimer interacts with peptide-bound HLA-E-B2M heterotrimeric complex. KLRD1 plays a prominent role in directly interacting with HLA-E (PubMed:18083576). KLRD1-KLRC1 interacts with much higher affinity with peptide-bound HLA-E-B2M than KLRD1-KLRC2 (PubMed:10428963, PubMed:9486650). Interacts with the adapter protein TYROBP/DAP12; this interaction is required for cell surface expression and cell activation (PubMed:15940674, PubMed:9655483).</text>
</comment>
<comment type="interaction">
    <interactant intactId="EBI-9018174">
        <id>Q13241</id>
    </interactant>
    <interactant intactId="EBI-9018187">
        <id>P26715</id>
        <label>KLRC1</label>
    </interactant>
    <organismsDiffer>false</organismsDiffer>
    <experiments>6</experiments>
</comment>
<comment type="interaction">
    <interactant intactId="EBI-9018174">
        <id>Q13241</id>
    </interactant>
    <interactant intactId="EBI-3862171">
        <id>P26717</id>
        <label>KLRC2</label>
    </interactant>
    <organismsDiffer>false</organismsDiffer>
    <experiments>2</experiments>
</comment>
<comment type="subcellular location">
    <subcellularLocation>
        <location evidence="15 26">Cell membrane</location>
        <topology evidence="1">Single-pass type II membrane protein</topology>
    </subcellularLocation>
</comment>
<comment type="alternative products">
    <event type="alternative splicing"/>
    <isoform>
        <id>Q13241-1</id>
        <name>1</name>
        <name>CD94-A</name>
        <sequence type="displayed"/>
    </isoform>
    <isoform>
        <id>Q13241-2</id>
        <name>2</name>
        <name>CD94-B</name>
        <sequence type="described" ref="VSP_003053"/>
    </isoform>
    <isoform>
        <id>Q13241-3</id>
        <name>3</name>
        <name>CD94 alt</name>
        <sequence type="described" ref="VSP_003052"/>
    </isoform>
</comment>
<comment type="tissue specificity">
    <text evidence="7 15 16 24 26">Expressed in NK cell subsets (at protein level) (PubMed:21825173, PubMed:9430220, PubMed:9485206). Expressed in memory/effector CD8-positive alpha-beta T cell subsets (at protein level) (PubMed:12387742, PubMed:20952657). Expressed in melanoma-specific cytotoxic T cell clones (at protein level) (PubMed:9485206). Expressed in terminally differentiated cytotoxic gamma-delta T cells (at protein level) (PubMed:20952657). KLRD1-KLRC1 and KLRD1-KLRC2 are differentially expressed in NK and T cell populations, with only minor subsets expressing both receptor complexes (at protein level) (PubMed:20952657).</text>
</comment>
<comment type="online information" name="Functional Glycomics Gateway - Glycan Binding">
    <link uri="http://www.functionalglycomics.org/glycomics/GBPServlet?&amp;operationType=view&amp;cbpId=cbp_hum_Ctlect_238"/>
    <text>CD94</text>
</comment>